<gene>
    <name evidence="1" type="primary">rplC</name>
    <name type="ordered locus">PXO_04521</name>
</gene>
<proteinExistence type="inferred from homology"/>
<evidence type="ECO:0000255" key="1">
    <source>
        <dbReference type="HAMAP-Rule" id="MF_01325"/>
    </source>
</evidence>
<evidence type="ECO:0000305" key="2"/>
<reference key="1">
    <citation type="journal article" date="2008" name="BMC Genomics">
        <title>Genome sequence and rapid evolution of the rice pathogen Xanthomonas oryzae pv. oryzae PXO99A.</title>
        <authorList>
            <person name="Salzberg S.L."/>
            <person name="Sommer D.D."/>
            <person name="Schatz M.C."/>
            <person name="Phillippy A.M."/>
            <person name="Rabinowicz P.D."/>
            <person name="Tsuge S."/>
            <person name="Furutani A."/>
            <person name="Ochiai H."/>
            <person name="Delcher A.L."/>
            <person name="Kelley D."/>
            <person name="Madupu R."/>
            <person name="Puiu D."/>
            <person name="Radune D."/>
            <person name="Shumway M."/>
            <person name="Trapnell C."/>
            <person name="Aparna G."/>
            <person name="Jha G."/>
            <person name="Pandey A."/>
            <person name="Patil P.B."/>
            <person name="Ishihara H."/>
            <person name="Meyer D.F."/>
            <person name="Szurek B."/>
            <person name="Verdier V."/>
            <person name="Koebnik R."/>
            <person name="Dow J.M."/>
            <person name="Ryan R.P."/>
            <person name="Hirata H."/>
            <person name="Tsuyumu S."/>
            <person name="Won Lee S."/>
            <person name="Seo Y.-S."/>
            <person name="Sriariyanum M."/>
            <person name="Ronald P.C."/>
            <person name="Sonti R.V."/>
            <person name="Van Sluys M.-A."/>
            <person name="Leach J.E."/>
            <person name="White F.F."/>
            <person name="Bogdanove A.J."/>
        </authorList>
    </citation>
    <scope>NUCLEOTIDE SEQUENCE [LARGE SCALE GENOMIC DNA]</scope>
    <source>
        <strain>PXO99A</strain>
    </source>
</reference>
<comment type="function">
    <text evidence="1">One of the primary rRNA binding proteins, it binds directly near the 3'-end of the 23S rRNA, where it nucleates assembly of the 50S subunit.</text>
</comment>
<comment type="subunit">
    <text evidence="1">Part of the 50S ribosomal subunit. Forms a cluster with proteins L14 and L19.</text>
</comment>
<comment type="PTM">
    <text evidence="1">Methylated by PrmB.</text>
</comment>
<comment type="similarity">
    <text evidence="1">Belongs to the universal ribosomal protein uL3 family.</text>
</comment>
<comment type="sequence caution" evidence="2">
    <conflict type="erroneous initiation">
        <sequence resource="EMBL-CDS" id="ACD57887"/>
    </conflict>
</comment>
<accession>B2SQR0</accession>
<sequence length="216" mass="22889">MTKKYSLGFVGRKAGMSRIFTEDGRSVPVTLIEATPNRIAQIKTVEVDGYSAVQITVGARRAALVNKPAAGHFAKAKVEAGRGLWEFRVEDAHLGDFAVGGEIKADIFEVGQKVDVQGVTKGKGFQGTIKRYNFRMGDATHGNSLSHRAPGSLGQRQTPGRVFPGKKMSGHMGAVQQSTQNLEVVKVDVERGLIAIHGAVPGAAGGDVIVRPASKA</sequence>
<protein>
    <recommendedName>
        <fullName evidence="1">Large ribosomal subunit protein uL3</fullName>
    </recommendedName>
    <alternativeName>
        <fullName evidence="2">50S ribosomal protein L3</fullName>
    </alternativeName>
</protein>
<organism>
    <name type="scientific">Xanthomonas oryzae pv. oryzae (strain PXO99A)</name>
    <dbReference type="NCBI Taxonomy" id="360094"/>
    <lineage>
        <taxon>Bacteria</taxon>
        <taxon>Pseudomonadati</taxon>
        <taxon>Pseudomonadota</taxon>
        <taxon>Gammaproteobacteria</taxon>
        <taxon>Lysobacterales</taxon>
        <taxon>Lysobacteraceae</taxon>
        <taxon>Xanthomonas</taxon>
    </lineage>
</organism>
<keyword id="KW-0488">Methylation</keyword>
<keyword id="KW-0687">Ribonucleoprotein</keyword>
<keyword id="KW-0689">Ribosomal protein</keyword>
<keyword id="KW-0694">RNA-binding</keyword>
<keyword id="KW-0699">rRNA-binding</keyword>
<name>RL3_XANOP</name>
<feature type="chain" id="PRO_0000353619" description="Large ribosomal subunit protein uL3">
    <location>
        <begin position="1"/>
        <end position="216"/>
    </location>
</feature>
<feature type="modified residue" description="N5-methylglutamine" evidence="1">
    <location>
        <position position="157"/>
    </location>
</feature>
<dbReference type="EMBL" id="CP000967">
    <property type="protein sequence ID" value="ACD57887.1"/>
    <property type="status" value="ALT_INIT"/>
    <property type="molecule type" value="Genomic_DNA"/>
</dbReference>
<dbReference type="RefSeq" id="WP_011260029.1">
    <property type="nucleotide sequence ID" value="NC_010717.2"/>
</dbReference>
<dbReference type="SMR" id="B2SQR0"/>
<dbReference type="KEGG" id="xop:PXO_04521"/>
<dbReference type="eggNOG" id="COG0087">
    <property type="taxonomic scope" value="Bacteria"/>
</dbReference>
<dbReference type="HOGENOM" id="CLU_044142_4_1_6"/>
<dbReference type="Proteomes" id="UP000001740">
    <property type="component" value="Chromosome"/>
</dbReference>
<dbReference type="GO" id="GO:0022625">
    <property type="term" value="C:cytosolic large ribosomal subunit"/>
    <property type="evidence" value="ECO:0007669"/>
    <property type="project" value="TreeGrafter"/>
</dbReference>
<dbReference type="GO" id="GO:0019843">
    <property type="term" value="F:rRNA binding"/>
    <property type="evidence" value="ECO:0007669"/>
    <property type="project" value="UniProtKB-UniRule"/>
</dbReference>
<dbReference type="GO" id="GO:0003735">
    <property type="term" value="F:structural constituent of ribosome"/>
    <property type="evidence" value="ECO:0007669"/>
    <property type="project" value="InterPro"/>
</dbReference>
<dbReference type="GO" id="GO:0006412">
    <property type="term" value="P:translation"/>
    <property type="evidence" value="ECO:0007669"/>
    <property type="project" value="UniProtKB-UniRule"/>
</dbReference>
<dbReference type="FunFam" id="2.40.30.10:FF:000004">
    <property type="entry name" value="50S ribosomal protein L3"/>
    <property type="match status" value="1"/>
</dbReference>
<dbReference type="FunFam" id="3.30.160.810:FF:000001">
    <property type="entry name" value="50S ribosomal protein L3"/>
    <property type="match status" value="1"/>
</dbReference>
<dbReference type="Gene3D" id="3.30.160.810">
    <property type="match status" value="1"/>
</dbReference>
<dbReference type="Gene3D" id="2.40.30.10">
    <property type="entry name" value="Translation factors"/>
    <property type="match status" value="1"/>
</dbReference>
<dbReference type="HAMAP" id="MF_01325_B">
    <property type="entry name" value="Ribosomal_uL3_B"/>
    <property type="match status" value="1"/>
</dbReference>
<dbReference type="InterPro" id="IPR000597">
    <property type="entry name" value="Ribosomal_uL3"/>
</dbReference>
<dbReference type="InterPro" id="IPR019927">
    <property type="entry name" value="Ribosomal_uL3_bac/org-type"/>
</dbReference>
<dbReference type="InterPro" id="IPR019926">
    <property type="entry name" value="Ribosomal_uL3_CS"/>
</dbReference>
<dbReference type="InterPro" id="IPR009000">
    <property type="entry name" value="Transl_B-barrel_sf"/>
</dbReference>
<dbReference type="NCBIfam" id="TIGR03625">
    <property type="entry name" value="L3_bact"/>
    <property type="match status" value="1"/>
</dbReference>
<dbReference type="PANTHER" id="PTHR11229">
    <property type="entry name" value="50S RIBOSOMAL PROTEIN L3"/>
    <property type="match status" value="1"/>
</dbReference>
<dbReference type="PANTHER" id="PTHR11229:SF16">
    <property type="entry name" value="LARGE RIBOSOMAL SUBUNIT PROTEIN UL3C"/>
    <property type="match status" value="1"/>
</dbReference>
<dbReference type="Pfam" id="PF00297">
    <property type="entry name" value="Ribosomal_L3"/>
    <property type="match status" value="1"/>
</dbReference>
<dbReference type="SUPFAM" id="SSF50447">
    <property type="entry name" value="Translation proteins"/>
    <property type="match status" value="1"/>
</dbReference>
<dbReference type="PROSITE" id="PS00474">
    <property type="entry name" value="RIBOSOMAL_L3"/>
    <property type="match status" value="1"/>
</dbReference>